<organism>
    <name type="scientific">Cryphonectria parasitica mycoreovirus 1 (strain 9B21)</name>
    <name type="common">CpMYRV-1</name>
    <dbReference type="NCBI Taxonomy" id="230407"/>
    <lineage>
        <taxon>Viruses</taxon>
        <taxon>Riboviria</taxon>
        <taxon>Orthornavirae</taxon>
        <taxon>Duplornaviricota</taxon>
        <taxon>Resentoviricetes</taxon>
        <taxon>Reovirales</taxon>
        <taxon>Spinareoviridae</taxon>
        <taxon>Mycoreovirus</taxon>
        <taxon>Mycoreovirus 1</taxon>
    </lineage>
</organism>
<accession>Q65YV1</accession>
<sequence length="647" mass="72765">MSYITIIVISSDRPTPIHLSGIHSSCEVQSYTSVRSTVSVHHQEVEARPDCQIKSQYSDVVPIIANSLAEDNCNLMHDRIAYQLSELCASKRLDECITKLADLVPRHIDLLSAMPTLANLNPSFQRVHELLMDYSGQIMHVQQTISNLANPSKHVDFNTAVEILKSRMVERENAIERIQAIESVPLSHRVMEGTARHDLMKYKHADFRVTLPFSAPTSDWSSTEELRSDVHLVSDVNTCRNTDYGVIYKANPTHVEHVIWMSRQPLQIVDKSMTDTYFDEYLGAFRIICGDNVFHLHRHVAYNQNSQVIGVVLEGSPYLLRAIFRDLPRTLMTSFVFLTAVTPLPDQLLSFPYGGYIHTIVDSTAPLSHPLHPLTPSAETVCFYFSQLCHMGREHILSGEEIECVLPSGEVSTALYRLLTLINLDDSKRYVMTKRPYNVPNPVRHTIDVFLHDHGFHDVADALSEIGYMYATQKISCLLPTAITDIEGISPLAQVLLSLRVRCKNGVTKFGHTRLGQMSGLCKHGTPRNITQMMFISDDQTTEFFCPACGTVYETAFERQLCNVIDYMCVYNVPFDDGIFVMSPYYALNPKKSDPSTLKIVSSNIGYGAYPGIAMLGECYDAAIPPDFDTKTLSFARFRRATGGMML</sequence>
<feature type="chain" id="PRO_0000403427" description="Uncharacterized protein VP5">
    <location>
        <begin position="1"/>
        <end position="647"/>
    </location>
</feature>
<gene>
    <name type="primary">S5</name>
</gene>
<reference key="1">
    <citation type="journal article" date="2004" name="J. Gen. Virol.">
        <title>Complete genome sequence of Mycoreovirus-1/Cp9B21, a member of a novel genus within the family Reoviridae, isolated from the chestnut blight fungus Cryphonectria parasitica.</title>
        <authorList>
            <person name="Suzuki N."/>
            <person name="Supyani S."/>
            <person name="Maruyama K."/>
            <person name="Hillman B.I."/>
        </authorList>
    </citation>
    <scope>NUCLEOTIDE SEQUENCE [GENOMIC RNA]</scope>
</reference>
<organismHost>
    <name type="scientific">Cryphonectria parasitica</name>
    <name type="common">Chestnut blight fungus</name>
    <name type="synonym">Endothia parasitica</name>
    <dbReference type="NCBI Taxonomy" id="5116"/>
</organismHost>
<keyword id="KW-1185">Reference proteome</keyword>
<protein>
    <recommendedName>
        <fullName>Uncharacterized protein VP5</fullName>
    </recommendedName>
</protein>
<name>VP5_MYRV9</name>
<dbReference type="EMBL" id="AB179637">
    <property type="protein sequence ID" value="BAD51415.1"/>
    <property type="molecule type" value="Genomic_RNA"/>
</dbReference>
<dbReference type="RefSeq" id="YP_001936008.1">
    <property type="nucleotide sequence ID" value="NC_010747.1"/>
</dbReference>
<dbReference type="GeneID" id="6334547"/>
<dbReference type="KEGG" id="vg:6334547"/>
<dbReference type="Proteomes" id="UP000006719">
    <property type="component" value="Genome"/>
</dbReference>
<proteinExistence type="predicted"/>